<sequence length="870" mass="100923">MKYSLWALLLAVLGTQLLGSLCSTVRSQRFRGRIQQERKNIRPNIILVLTDDQDVELGSLQVMNKTRKIMEQGGATFTNAFVTTPMCCPSRSSMLTGKYVHNHNVYTNNENCSSPSWQAMHEPRTFAVYLNNTGYRTAFFGKYLNEYNGSYIPPGWREWLGLIKNSRFYNYTVCRNGIKEKHGFDYAKDYFTDLITNESINYFKMSKRMYPHRPIMMVISHAAPHGPEDSAPQFSKLYPNASQHITPSYNYAPNMDKHWIMQYTGPMLPIHMEFTNVLQRKRLQTLMSVDDSVERLYNMLVESGELDNTYIIYTADHGYHIGQFGLVKGKSMPYDFDIRVPFFIRGPSIEPGSIVPQIVLNIDLAPTILDIAGLDSPSDVDGKSVLKLLDLEKPGNRFRTNKKAKIWRDTFLVERGKFLRKKEESGKNIQQSNHLPKYERVKELCQQARYQTACEQPGQNWQCIEDTSGKLRIHKCKGPSDLLTVRQNARNLYSRGLHDKDKECHCRDSGYRSSRSQRKNQRQFLRNKGTPKYKPRFVHTRQTRSLSVEFEGEIYDINLEEEELQVLPPRSIAKRHDEGHQGFIGHQAAAGDIRNEMLADSNNAVGLPATVRVTHKCFILPNDTIHCERELYQSARAWKDHKAYIDKEIEVLQDKIKNLREVRGHLKKRKPEECGCGDQSYYNKEKGVKRQEKLKSHLHPFKEAAAQEVDSKLQLFKEHRRRKKERKEKKRQRKGEECSLPGLTCFTHDNNHWQTAPFWNLGSFCACTSSNNNTYWCLRTVNETHNFLFCEFATGFLEYFDMNTDPYQLTNTVHTVERSILNQLHIQLMELRSCQGYKQCNPRPKSLDIGAKEGGNYDPHRGQLWDGWEG</sequence>
<feature type="signal peptide" evidence="5">
    <location>
        <begin position="1"/>
        <end position="22"/>
    </location>
</feature>
<feature type="chain" id="PRO_0000033435" description="Extracellular sulfatase Sulf-1">
    <location>
        <begin position="23"/>
        <end position="870"/>
    </location>
</feature>
<feature type="chain" id="PRO_0000457757" description="Extracellular sulfatase Sulf-2 secreted form" evidence="2">
    <location>
        <begin position="545"/>
        <end position="870"/>
    </location>
</feature>
<feature type="region of interest" description="Catalytic domain; necessary for arylsulfatase activity" evidence="2">
    <location>
        <begin position="1"/>
        <end position="414"/>
    </location>
</feature>
<feature type="region of interest" description="Hydrophilic domain; necessary for endoglucosamine-6-sulfatase activity" evidence="2">
    <location>
        <begin position="415"/>
        <end position="733"/>
    </location>
</feature>
<feature type="region of interest" description="Disordered" evidence="6">
    <location>
        <begin position="507"/>
        <end position="533"/>
    </location>
</feature>
<feature type="region of interest" description="Disordered" evidence="6">
    <location>
        <begin position="848"/>
        <end position="870"/>
    </location>
</feature>
<feature type="active site" description="Nucleophile" evidence="1">
    <location>
        <position position="87"/>
    </location>
</feature>
<feature type="binding site" evidence="1">
    <location>
        <position position="51"/>
    </location>
    <ligand>
        <name>Ca(2+)</name>
        <dbReference type="ChEBI" id="CHEBI:29108"/>
    </ligand>
</feature>
<feature type="binding site" evidence="1">
    <location>
        <position position="52"/>
    </location>
    <ligand>
        <name>Ca(2+)</name>
        <dbReference type="ChEBI" id="CHEBI:29108"/>
    </ligand>
</feature>
<feature type="binding site" description="via 3-oxoalanine" evidence="1">
    <location>
        <position position="87"/>
    </location>
    <ligand>
        <name>Ca(2+)</name>
        <dbReference type="ChEBI" id="CHEBI:29108"/>
    </ligand>
</feature>
<feature type="binding site" evidence="1">
    <location>
        <position position="316"/>
    </location>
    <ligand>
        <name>Ca(2+)</name>
        <dbReference type="ChEBI" id="CHEBI:29108"/>
    </ligand>
</feature>
<feature type="binding site" evidence="1">
    <location>
        <position position="317"/>
    </location>
    <ligand>
        <name>Ca(2+)</name>
        <dbReference type="ChEBI" id="CHEBI:29108"/>
    </ligand>
</feature>
<feature type="site" description="Cleavage; by furin" evidence="2">
    <location>
        <begin position="544"/>
        <end position="545"/>
    </location>
</feature>
<feature type="modified residue" description="3-oxoalanine (Cys)" evidence="1">
    <location>
        <position position="87"/>
    </location>
</feature>
<feature type="glycosylation site" description="N-linked (GlcNAc...) asparagine" evidence="5">
    <location>
        <position position="64"/>
    </location>
</feature>
<feature type="glycosylation site" description="N-linked (GlcNAc...) asparagine" evidence="5">
    <location>
        <position position="111"/>
    </location>
</feature>
<feature type="glycosylation site" description="N-linked (GlcNAc...) asparagine" evidence="5">
    <location>
        <position position="131"/>
    </location>
</feature>
<feature type="glycosylation site" description="N-linked (GlcNAc...) asparagine" evidence="5">
    <location>
        <position position="148"/>
    </location>
</feature>
<feature type="glycosylation site" description="N-linked (GlcNAc...) asparagine" evidence="5">
    <location>
        <position position="170"/>
    </location>
</feature>
<feature type="glycosylation site" description="N-linked (GlcNAc...) asparagine" evidence="5">
    <location>
        <position position="197"/>
    </location>
</feature>
<feature type="glycosylation site" description="N-linked (GlcNAc...) asparagine" evidence="5">
    <location>
        <position position="240"/>
    </location>
</feature>
<feature type="glycosylation site" description="N-linked (GlcNAc...) asparagine" evidence="5">
    <location>
        <position position="622"/>
    </location>
</feature>
<feature type="glycosylation site" description="N-linked (GlcNAc...) asparagine" evidence="5">
    <location>
        <position position="772"/>
    </location>
</feature>
<feature type="glycosylation site" description="N-linked (GlcNAc...) asparagine" evidence="5">
    <location>
        <position position="782"/>
    </location>
</feature>
<feature type="sequence conflict" description="In Ref. 2; BAC25858." evidence="9" ref="2">
    <original>R</original>
    <variation>H</variation>
    <location>
        <position position="486"/>
    </location>
</feature>
<name>SULF1_MOUSE</name>
<organism>
    <name type="scientific">Mus musculus</name>
    <name type="common">Mouse</name>
    <dbReference type="NCBI Taxonomy" id="10090"/>
    <lineage>
        <taxon>Eukaryota</taxon>
        <taxon>Metazoa</taxon>
        <taxon>Chordata</taxon>
        <taxon>Craniata</taxon>
        <taxon>Vertebrata</taxon>
        <taxon>Euteleostomi</taxon>
        <taxon>Mammalia</taxon>
        <taxon>Eutheria</taxon>
        <taxon>Euarchontoglires</taxon>
        <taxon>Glires</taxon>
        <taxon>Rodentia</taxon>
        <taxon>Myomorpha</taxon>
        <taxon>Muroidea</taxon>
        <taxon>Muridae</taxon>
        <taxon>Murinae</taxon>
        <taxon>Mus</taxon>
        <taxon>Mus</taxon>
    </lineage>
</organism>
<dbReference type="EC" id="3.1.6.1" evidence="3"/>
<dbReference type="EC" id="3.1.6.14" evidence="3"/>
<dbReference type="EMBL" id="AY101178">
    <property type="protein sequence ID" value="AAM76863.1"/>
    <property type="molecule type" value="mRNA"/>
</dbReference>
<dbReference type="EMBL" id="AK129278">
    <property type="protein sequence ID" value="BAC98088.1"/>
    <property type="status" value="ALT_SEQ"/>
    <property type="molecule type" value="Transcribed_RNA"/>
</dbReference>
<dbReference type="EMBL" id="AK028285">
    <property type="protein sequence ID" value="BAC25858.1"/>
    <property type="molecule type" value="mRNA"/>
</dbReference>
<dbReference type="EMBL" id="AK045002">
    <property type="protein sequence ID" value="BAC32179.1"/>
    <property type="status" value="ALT_SEQ"/>
    <property type="molecule type" value="mRNA"/>
</dbReference>
<dbReference type="EMBL" id="BC034547">
    <property type="protein sequence ID" value="AAH34547.1"/>
    <property type="molecule type" value="mRNA"/>
</dbReference>
<dbReference type="EMBL" id="BC049276">
    <property type="protein sequence ID" value="AAH49276.1"/>
    <property type="molecule type" value="mRNA"/>
</dbReference>
<dbReference type="CCDS" id="CCDS14820.1"/>
<dbReference type="RefSeq" id="NP_001185494.1">
    <property type="nucleotide sequence ID" value="NM_001198565.2"/>
</dbReference>
<dbReference type="RefSeq" id="NP_001185495.1">
    <property type="nucleotide sequence ID" value="NM_001198566.2"/>
</dbReference>
<dbReference type="RefSeq" id="NP_758498.1">
    <property type="nucleotide sequence ID" value="NM_172294.2"/>
</dbReference>
<dbReference type="RefSeq" id="XP_036020594.1">
    <property type="nucleotide sequence ID" value="XM_036164701.1"/>
</dbReference>
<dbReference type="SMR" id="Q8K007"/>
<dbReference type="BioGRID" id="232231">
    <property type="interactions" value="3"/>
</dbReference>
<dbReference type="FunCoup" id="Q8K007">
    <property type="interactions" value="423"/>
</dbReference>
<dbReference type="STRING" id="10090.ENSMUSP00000137523"/>
<dbReference type="GlyCosmos" id="Q8K007">
    <property type="glycosylation" value="10 sites, No reported glycans"/>
</dbReference>
<dbReference type="GlyGen" id="Q8K007">
    <property type="glycosylation" value="10 sites, 2 N-linked glycans (4 sites)"/>
</dbReference>
<dbReference type="iPTMnet" id="Q8K007"/>
<dbReference type="PhosphoSitePlus" id="Q8K007"/>
<dbReference type="PaxDb" id="10090-ENSMUSP00000137523"/>
<dbReference type="ProteomicsDB" id="254693"/>
<dbReference type="Antibodypedia" id="25041">
    <property type="antibodies" value="120 antibodies from 24 providers"/>
</dbReference>
<dbReference type="DNASU" id="240725"/>
<dbReference type="Ensembl" id="ENSMUST00000088585.10">
    <property type="protein sequence ID" value="ENSMUSP00000085949.4"/>
    <property type="gene ID" value="ENSMUSG00000016918.16"/>
</dbReference>
<dbReference type="Ensembl" id="ENSMUST00000177608.8">
    <property type="protein sequence ID" value="ENSMUSP00000137523.2"/>
    <property type="gene ID" value="ENSMUSG00000016918.16"/>
</dbReference>
<dbReference type="Ensembl" id="ENSMUST00000180062.8">
    <property type="protein sequence ID" value="ENSMUSP00000136014.2"/>
    <property type="gene ID" value="ENSMUSG00000016918.16"/>
</dbReference>
<dbReference type="GeneID" id="240725"/>
<dbReference type="KEGG" id="mmu:240725"/>
<dbReference type="UCSC" id="uc007aia.2">
    <property type="organism name" value="mouse"/>
</dbReference>
<dbReference type="AGR" id="MGI:2138563"/>
<dbReference type="CTD" id="23213"/>
<dbReference type="MGI" id="MGI:2138563">
    <property type="gene designation" value="Sulf1"/>
</dbReference>
<dbReference type="VEuPathDB" id="HostDB:ENSMUSG00000016918"/>
<dbReference type="eggNOG" id="KOG3731">
    <property type="taxonomic scope" value="Eukaryota"/>
</dbReference>
<dbReference type="GeneTree" id="ENSGT00940000157544"/>
<dbReference type="HOGENOM" id="CLU_006332_2_0_1"/>
<dbReference type="InParanoid" id="Q8K007"/>
<dbReference type="OMA" id="VETPPQM"/>
<dbReference type="OrthoDB" id="96314at2759"/>
<dbReference type="PhylomeDB" id="Q8K007"/>
<dbReference type="TreeFam" id="TF313545"/>
<dbReference type="BioGRID-ORCS" id="240725">
    <property type="hits" value="1 hit in 79 CRISPR screens"/>
</dbReference>
<dbReference type="ChiTaRS" id="Sulf1">
    <property type="organism name" value="mouse"/>
</dbReference>
<dbReference type="PRO" id="PR:Q8K007"/>
<dbReference type="Proteomes" id="UP000000589">
    <property type="component" value="Chromosome 1"/>
</dbReference>
<dbReference type="RNAct" id="Q8K007">
    <property type="molecule type" value="protein"/>
</dbReference>
<dbReference type="Bgee" id="ENSMUSG00000016918">
    <property type="expression patterns" value="Expressed in vestibular membrane of cochlear duct and 253 other cell types or tissues"/>
</dbReference>
<dbReference type="ExpressionAtlas" id="Q8K007">
    <property type="expression patterns" value="baseline and differential"/>
</dbReference>
<dbReference type="GO" id="GO:0009986">
    <property type="term" value="C:cell surface"/>
    <property type="evidence" value="ECO:0000250"/>
    <property type="project" value="UniProtKB"/>
</dbReference>
<dbReference type="GO" id="GO:0005783">
    <property type="term" value="C:endoplasmic reticulum"/>
    <property type="evidence" value="ECO:0000250"/>
    <property type="project" value="UniProtKB"/>
</dbReference>
<dbReference type="GO" id="GO:0005615">
    <property type="term" value="C:extracellular space"/>
    <property type="evidence" value="ECO:0000250"/>
    <property type="project" value="UniProtKB"/>
</dbReference>
<dbReference type="GO" id="GO:0005795">
    <property type="term" value="C:Golgi stack"/>
    <property type="evidence" value="ECO:0007669"/>
    <property type="project" value="UniProtKB-SubCell"/>
</dbReference>
<dbReference type="GO" id="GO:0045121">
    <property type="term" value="C:membrane raft"/>
    <property type="evidence" value="ECO:0000250"/>
    <property type="project" value="UniProtKB"/>
</dbReference>
<dbReference type="GO" id="GO:0005886">
    <property type="term" value="C:plasma membrane"/>
    <property type="evidence" value="ECO:0000314"/>
    <property type="project" value="UniProtKB"/>
</dbReference>
<dbReference type="GO" id="GO:0004065">
    <property type="term" value="F:arylsulfatase activity"/>
    <property type="evidence" value="ECO:0000250"/>
    <property type="project" value="UniProtKB"/>
</dbReference>
<dbReference type="GO" id="GO:0005509">
    <property type="term" value="F:calcium ion binding"/>
    <property type="evidence" value="ECO:0007669"/>
    <property type="project" value="InterPro"/>
</dbReference>
<dbReference type="GO" id="GO:0008449">
    <property type="term" value="F:N-acetylglucosamine-6-sulfatase activity"/>
    <property type="evidence" value="ECO:0000315"/>
    <property type="project" value="UniProtKB"/>
</dbReference>
<dbReference type="GO" id="GO:0006915">
    <property type="term" value="P:apoptotic process"/>
    <property type="evidence" value="ECO:0007669"/>
    <property type="project" value="UniProtKB-KW"/>
</dbReference>
<dbReference type="GO" id="GO:0060348">
    <property type="term" value="P:bone development"/>
    <property type="evidence" value="ECO:0000316"/>
    <property type="project" value="BHF-UCL"/>
</dbReference>
<dbReference type="GO" id="GO:0001502">
    <property type="term" value="P:cartilage condensation"/>
    <property type="evidence" value="ECO:0000250"/>
    <property type="project" value="UniProtKB"/>
</dbReference>
<dbReference type="GO" id="GO:0051216">
    <property type="term" value="P:cartilage development"/>
    <property type="evidence" value="ECO:0000315"/>
    <property type="project" value="UniProtKB"/>
</dbReference>
<dbReference type="GO" id="GO:0007155">
    <property type="term" value="P:cell adhesion"/>
    <property type="evidence" value="ECO:0000250"/>
    <property type="project" value="UniProtKB"/>
</dbReference>
<dbReference type="GO" id="GO:0002063">
    <property type="term" value="P:chondrocyte development"/>
    <property type="evidence" value="ECO:0000315"/>
    <property type="project" value="UniProtKB"/>
</dbReference>
<dbReference type="GO" id="GO:0048706">
    <property type="term" value="P:embryonic skeletal system development"/>
    <property type="evidence" value="ECO:0000316"/>
    <property type="project" value="UniProtKB"/>
</dbReference>
<dbReference type="GO" id="GO:0014846">
    <property type="term" value="P:esophagus smooth muscle contraction"/>
    <property type="evidence" value="ECO:0000316"/>
    <property type="project" value="UniProtKB"/>
</dbReference>
<dbReference type="GO" id="GO:0035860">
    <property type="term" value="P:glial cell-derived neurotrophic factor receptor signaling pathway"/>
    <property type="evidence" value="ECO:0000314"/>
    <property type="project" value="UniProtKB"/>
</dbReference>
<dbReference type="GO" id="GO:0032836">
    <property type="term" value="P:glomerular basement membrane development"/>
    <property type="evidence" value="ECO:0000316"/>
    <property type="project" value="UniProtKB"/>
</dbReference>
<dbReference type="GO" id="GO:0003094">
    <property type="term" value="P:glomerular filtration"/>
    <property type="evidence" value="ECO:0000316"/>
    <property type="project" value="UniProtKB"/>
</dbReference>
<dbReference type="GO" id="GO:0030201">
    <property type="term" value="P:heparan sulfate proteoglycan metabolic process"/>
    <property type="evidence" value="ECO:0000315"/>
    <property type="project" value="UniProtKB"/>
</dbReference>
<dbReference type="GO" id="GO:0060384">
    <property type="term" value="P:innervation"/>
    <property type="evidence" value="ECO:0000316"/>
    <property type="project" value="UniProtKB"/>
</dbReference>
<dbReference type="GO" id="GO:0001822">
    <property type="term" value="P:kidney development"/>
    <property type="evidence" value="ECO:0000316"/>
    <property type="project" value="BHF-UCL"/>
</dbReference>
<dbReference type="GO" id="GO:0036022">
    <property type="term" value="P:limb joint morphogenesis"/>
    <property type="evidence" value="ECO:0000250"/>
    <property type="project" value="UniProtKB"/>
</dbReference>
<dbReference type="GO" id="GO:0016525">
    <property type="term" value="P:negative regulation of angiogenesis"/>
    <property type="evidence" value="ECO:0000250"/>
    <property type="project" value="UniProtKB"/>
</dbReference>
<dbReference type="GO" id="GO:0030336">
    <property type="term" value="P:negative regulation of cell migration"/>
    <property type="evidence" value="ECO:0000250"/>
    <property type="project" value="UniProtKB"/>
</dbReference>
<dbReference type="GO" id="GO:0001937">
    <property type="term" value="P:negative regulation of endothelial cell proliferation"/>
    <property type="evidence" value="ECO:0000250"/>
    <property type="project" value="UniProtKB"/>
</dbReference>
<dbReference type="GO" id="GO:0040037">
    <property type="term" value="P:negative regulation of fibroblast growth factor receptor signaling pathway"/>
    <property type="evidence" value="ECO:0000314"/>
    <property type="project" value="UniProtKB"/>
</dbReference>
<dbReference type="GO" id="GO:0060686">
    <property type="term" value="P:negative regulation of prostatic bud formation"/>
    <property type="evidence" value="ECO:0000314"/>
    <property type="project" value="UniProtKB"/>
</dbReference>
<dbReference type="GO" id="GO:0030513">
    <property type="term" value="P:positive regulation of BMP signaling pathway"/>
    <property type="evidence" value="ECO:0000250"/>
    <property type="project" value="UniProtKB"/>
</dbReference>
<dbReference type="GO" id="GO:0048661">
    <property type="term" value="P:positive regulation of smooth muscle cell proliferation"/>
    <property type="evidence" value="ECO:0000250"/>
    <property type="project" value="UniProtKB"/>
</dbReference>
<dbReference type="GO" id="GO:0010575">
    <property type="term" value="P:positive regulation of vascular endothelial growth factor production"/>
    <property type="evidence" value="ECO:0000316"/>
    <property type="project" value="UniProtKB"/>
</dbReference>
<dbReference type="GO" id="GO:0030177">
    <property type="term" value="P:positive regulation of Wnt signaling pathway"/>
    <property type="evidence" value="ECO:0000250"/>
    <property type="project" value="UniProtKB"/>
</dbReference>
<dbReference type="GO" id="GO:0006790">
    <property type="term" value="P:sulfur compound metabolic process"/>
    <property type="evidence" value="ECO:0000266"/>
    <property type="project" value="MGI"/>
</dbReference>
<dbReference type="GO" id="GO:0048010">
    <property type="term" value="P:vascular endothelial growth factor receptor signaling pathway"/>
    <property type="evidence" value="ECO:0000250"/>
    <property type="project" value="UniProtKB"/>
</dbReference>
<dbReference type="CDD" id="cd16147">
    <property type="entry name" value="G6S"/>
    <property type="match status" value="1"/>
</dbReference>
<dbReference type="FunFam" id="3.40.720.10:FF:000003">
    <property type="entry name" value="Extracellular sulfatase"/>
    <property type="match status" value="1"/>
</dbReference>
<dbReference type="Gene3D" id="3.40.720.10">
    <property type="entry name" value="Alkaline Phosphatase, subunit A"/>
    <property type="match status" value="1"/>
</dbReference>
<dbReference type="InterPro" id="IPR017850">
    <property type="entry name" value="Alkaline_phosphatase_core_sf"/>
</dbReference>
<dbReference type="InterPro" id="IPR014615">
    <property type="entry name" value="Extracellular_sulfatase"/>
</dbReference>
<dbReference type="InterPro" id="IPR024609">
    <property type="entry name" value="Extracellular_sulfatase_C"/>
</dbReference>
<dbReference type="InterPro" id="IPR024607">
    <property type="entry name" value="Sulfatase_CS"/>
</dbReference>
<dbReference type="InterPro" id="IPR000917">
    <property type="entry name" value="Sulfatase_N"/>
</dbReference>
<dbReference type="PANTHER" id="PTHR43108:SF1">
    <property type="entry name" value="EXTRACELLULAR SULFATASE SULF-1"/>
    <property type="match status" value="1"/>
</dbReference>
<dbReference type="PANTHER" id="PTHR43108">
    <property type="entry name" value="N-ACETYLGLUCOSAMINE-6-SULFATASE FAMILY MEMBER"/>
    <property type="match status" value="1"/>
</dbReference>
<dbReference type="Pfam" id="PF12548">
    <property type="entry name" value="DUF3740"/>
    <property type="match status" value="2"/>
</dbReference>
<dbReference type="Pfam" id="PF00884">
    <property type="entry name" value="Sulfatase"/>
    <property type="match status" value="1"/>
</dbReference>
<dbReference type="PIRSF" id="PIRSF036665">
    <property type="entry name" value="Sulf1"/>
    <property type="match status" value="1"/>
</dbReference>
<dbReference type="SUPFAM" id="SSF53649">
    <property type="entry name" value="Alkaline phosphatase-like"/>
    <property type="match status" value="2"/>
</dbReference>
<dbReference type="PROSITE" id="PS00523">
    <property type="entry name" value="SULFATASE_1"/>
    <property type="match status" value="1"/>
</dbReference>
<protein>
    <recommendedName>
        <fullName>Extracellular sulfatase Sulf-1</fullName>
        <shortName>mSulf-1</shortName>
    </recommendedName>
    <alternativeName>
        <fullName>Arylsulfatase</fullName>
        <ecNumber evidence="3">3.1.6.1</ecNumber>
    </alternativeName>
    <alternativeName>
        <fullName>N-acetylglucosamine-6-sulfatase</fullName>
        <ecNumber evidence="3">3.1.6.14</ecNumber>
    </alternativeName>
    <component>
        <recommendedName>
            <fullName evidence="8">Extracellular sulfatase Sulf-2 secreted form</fullName>
        </recommendedName>
    </component>
</protein>
<proteinExistence type="evidence at protein level"/>
<accession>Q8K007</accession>
<accession>Q6ZPZ0</accession>
<accession>Q8BLJ0</accession>
<accession>Q8C1D3</accession>
<keyword id="KW-0053">Apoptosis</keyword>
<keyword id="KW-0106">Calcium</keyword>
<keyword id="KW-0256">Endoplasmic reticulum</keyword>
<keyword id="KW-0325">Glycoprotein</keyword>
<keyword id="KW-0333">Golgi apparatus</keyword>
<keyword id="KW-0378">Hydrolase</keyword>
<keyword id="KW-0479">Metal-binding</keyword>
<keyword id="KW-1185">Reference proteome</keyword>
<keyword id="KW-0964">Secreted</keyword>
<keyword id="KW-0732">Signal</keyword>
<gene>
    <name type="primary">Sulf1</name>
    <name type="synonym">Kiaa1077</name>
</gene>
<evidence type="ECO:0000250" key="1">
    <source>
        <dbReference type="UniProtKB" id="P15289"/>
    </source>
</evidence>
<evidence type="ECO:0000250" key="2">
    <source>
        <dbReference type="UniProtKB" id="Q8IWU5"/>
    </source>
</evidence>
<evidence type="ECO:0000250" key="3">
    <source>
        <dbReference type="UniProtKB" id="Q8IWU6"/>
    </source>
</evidence>
<evidence type="ECO:0000250" key="4">
    <source>
        <dbReference type="UniProtKB" id="Q8VI60"/>
    </source>
</evidence>
<evidence type="ECO:0000255" key="5"/>
<evidence type="ECO:0000256" key="6">
    <source>
        <dbReference type="SAM" id="MobiDB-lite"/>
    </source>
</evidence>
<evidence type="ECO:0000269" key="7">
    <source>
    </source>
</evidence>
<evidence type="ECO:0000303" key="8">
    <source>
    </source>
</evidence>
<evidence type="ECO:0000305" key="9"/>
<comment type="function">
    <text evidence="3">Exhibits arylsulfatase activity and highly specific endoglucosamine-6-sulfatase activity (By similarity). It can remove sulfate from the C-6 position of glucosamine within specific subregions of intact heparin (By similarity). Diminishes HSPG (heparan sulfate proteoglycans) sulfation, inhibits signaling by heparin-dependent growth factors, diminishes proliferation, and facilitates apoptosis in response to exogenous stimulation (By similarity).</text>
</comment>
<comment type="catalytic activity">
    <reaction evidence="3">
        <text>an aryl sulfate + H2O = a phenol + sulfate + H(+)</text>
        <dbReference type="Rhea" id="RHEA:17261"/>
        <dbReference type="ChEBI" id="CHEBI:15377"/>
        <dbReference type="ChEBI" id="CHEBI:15378"/>
        <dbReference type="ChEBI" id="CHEBI:16189"/>
        <dbReference type="ChEBI" id="CHEBI:33853"/>
        <dbReference type="ChEBI" id="CHEBI:140317"/>
        <dbReference type="EC" id="3.1.6.1"/>
    </reaction>
</comment>
<comment type="catalytic activity">
    <reaction evidence="3">
        <text>Hydrolysis of the 6-sulfate groups of the N-acetyl-D-glucosamine 6-sulfate units of heparan sulfate and keratan sulfate.</text>
        <dbReference type="EC" id="3.1.6.14"/>
    </reaction>
</comment>
<comment type="cofactor">
    <cofactor evidence="1">
        <name>Ca(2+)</name>
        <dbReference type="ChEBI" id="CHEBI:29108"/>
    </cofactor>
    <text evidence="1">Binds 1 Ca(2+) ion per subunit.</text>
</comment>
<comment type="subcellular location">
    <subcellularLocation>
        <location evidence="4">Endoplasmic reticulum</location>
    </subcellularLocation>
    <subcellularLocation>
        <location evidence="4">Golgi apparatus</location>
        <location evidence="4">Golgi stack</location>
    </subcellularLocation>
    <subcellularLocation>
        <location evidence="7">Cell surface</location>
    </subcellularLocation>
</comment>
<comment type="subcellular location">
    <molecule>Extracellular sulfatase Sulf-2 secreted form</molecule>
    <subcellularLocation>
        <location evidence="7">Secreted</location>
    </subcellularLocation>
</comment>
<comment type="PTM">
    <text evidence="7">Processing by furin produces a secreted form.</text>
</comment>
<comment type="PTM">
    <text evidence="1">The conversion to 3-oxoalanine (also known as C-formylglycine, FGly), of a serine or cysteine residue in prokaryotes and of a cysteine residue in eukaryotes, is critical for catalytic activity.</text>
</comment>
<comment type="similarity">
    <text evidence="9">Belongs to the sulfatase family.</text>
</comment>
<comment type="sequence caution" evidence="9">
    <conflict type="miscellaneous discrepancy">
        <sequence resource="EMBL-CDS" id="BAC32179"/>
    </conflict>
    <text>Intron retention.</text>
</comment>
<comment type="sequence caution" evidence="9">
    <conflict type="erroneous initiation">
        <sequence resource="EMBL-CDS" id="BAC98088"/>
    </conflict>
    <text>Truncated N-terminus.</text>
</comment>
<comment type="sequence caution" evidence="9">
    <conflict type="miscellaneous discrepancy">
        <sequence resource="EMBL-CDS" id="BAC98088"/>
    </conflict>
    <text>Intron retention. The sequence is a pre-RNA and intronic sequences remain.</text>
</comment>
<reference key="1">
    <citation type="journal article" date="2002" name="J. Biol. Chem.">
        <title>Cloning and characterization of two extracellular heparin-degrading endosulfatases in mice and humans.</title>
        <authorList>
            <person name="Morimoto-Tomita M."/>
            <person name="Uchimura K."/>
            <person name="Werb Z."/>
            <person name="Hemmerich S."/>
            <person name="Rosen S.D."/>
        </authorList>
    </citation>
    <scope>NUCLEOTIDE SEQUENCE [MRNA]</scope>
    <scope>SUBCELLULAR LOCATION</scope>
    <scope>PROTEOLYTIC CLEAVAGE</scope>
    <source>
        <strain>C57BL/6J</strain>
    </source>
</reference>
<reference key="2">
    <citation type="journal article" date="2003" name="DNA Res.">
        <title>Prediction of the coding sequences of mouse homologues of KIAA gene: III. The complete nucleotide sequences of 500 mouse KIAA-homologous cDNAs identified by screening of terminal sequences of cDNA clones randomly sampled from size-fractionated libraries.</title>
        <authorList>
            <person name="Okazaki N."/>
            <person name="Kikuno R."/>
            <person name="Ohara R."/>
            <person name="Inamoto S."/>
            <person name="Koseki H."/>
            <person name="Hiraoka S."/>
            <person name="Saga Y."/>
            <person name="Nagase T."/>
            <person name="Ohara O."/>
            <person name="Koga H."/>
        </authorList>
    </citation>
    <scope>NUCLEOTIDE SEQUENCE [LARGE SCALE MRNA]</scope>
    <source>
        <tissue>Embryonic tail</tissue>
    </source>
</reference>
<reference key="3">
    <citation type="journal article" date="2005" name="Science">
        <title>The transcriptional landscape of the mammalian genome.</title>
        <authorList>
            <person name="Carninci P."/>
            <person name="Kasukawa T."/>
            <person name="Katayama S."/>
            <person name="Gough J."/>
            <person name="Frith M.C."/>
            <person name="Maeda N."/>
            <person name="Oyama R."/>
            <person name="Ravasi T."/>
            <person name="Lenhard B."/>
            <person name="Wells C."/>
            <person name="Kodzius R."/>
            <person name="Shimokawa K."/>
            <person name="Bajic V.B."/>
            <person name="Brenner S.E."/>
            <person name="Batalov S."/>
            <person name="Forrest A.R."/>
            <person name="Zavolan M."/>
            <person name="Davis M.J."/>
            <person name="Wilming L.G."/>
            <person name="Aidinis V."/>
            <person name="Allen J.E."/>
            <person name="Ambesi-Impiombato A."/>
            <person name="Apweiler R."/>
            <person name="Aturaliya R.N."/>
            <person name="Bailey T.L."/>
            <person name="Bansal M."/>
            <person name="Baxter L."/>
            <person name="Beisel K.W."/>
            <person name="Bersano T."/>
            <person name="Bono H."/>
            <person name="Chalk A.M."/>
            <person name="Chiu K.P."/>
            <person name="Choudhary V."/>
            <person name="Christoffels A."/>
            <person name="Clutterbuck D.R."/>
            <person name="Crowe M.L."/>
            <person name="Dalla E."/>
            <person name="Dalrymple B.P."/>
            <person name="de Bono B."/>
            <person name="Della Gatta G."/>
            <person name="di Bernardo D."/>
            <person name="Down T."/>
            <person name="Engstrom P."/>
            <person name="Fagiolini M."/>
            <person name="Faulkner G."/>
            <person name="Fletcher C.F."/>
            <person name="Fukushima T."/>
            <person name="Furuno M."/>
            <person name="Futaki S."/>
            <person name="Gariboldi M."/>
            <person name="Georgii-Hemming P."/>
            <person name="Gingeras T.R."/>
            <person name="Gojobori T."/>
            <person name="Green R.E."/>
            <person name="Gustincich S."/>
            <person name="Harbers M."/>
            <person name="Hayashi Y."/>
            <person name="Hensch T.K."/>
            <person name="Hirokawa N."/>
            <person name="Hill D."/>
            <person name="Huminiecki L."/>
            <person name="Iacono M."/>
            <person name="Ikeo K."/>
            <person name="Iwama A."/>
            <person name="Ishikawa T."/>
            <person name="Jakt M."/>
            <person name="Kanapin A."/>
            <person name="Katoh M."/>
            <person name="Kawasawa Y."/>
            <person name="Kelso J."/>
            <person name="Kitamura H."/>
            <person name="Kitano H."/>
            <person name="Kollias G."/>
            <person name="Krishnan S.P."/>
            <person name="Kruger A."/>
            <person name="Kummerfeld S.K."/>
            <person name="Kurochkin I.V."/>
            <person name="Lareau L.F."/>
            <person name="Lazarevic D."/>
            <person name="Lipovich L."/>
            <person name="Liu J."/>
            <person name="Liuni S."/>
            <person name="McWilliam S."/>
            <person name="Madan Babu M."/>
            <person name="Madera M."/>
            <person name="Marchionni L."/>
            <person name="Matsuda H."/>
            <person name="Matsuzawa S."/>
            <person name="Miki H."/>
            <person name="Mignone F."/>
            <person name="Miyake S."/>
            <person name="Morris K."/>
            <person name="Mottagui-Tabar S."/>
            <person name="Mulder N."/>
            <person name="Nakano N."/>
            <person name="Nakauchi H."/>
            <person name="Ng P."/>
            <person name="Nilsson R."/>
            <person name="Nishiguchi S."/>
            <person name="Nishikawa S."/>
            <person name="Nori F."/>
            <person name="Ohara O."/>
            <person name="Okazaki Y."/>
            <person name="Orlando V."/>
            <person name="Pang K.C."/>
            <person name="Pavan W.J."/>
            <person name="Pavesi G."/>
            <person name="Pesole G."/>
            <person name="Petrovsky N."/>
            <person name="Piazza S."/>
            <person name="Reed J."/>
            <person name="Reid J.F."/>
            <person name="Ring B.Z."/>
            <person name="Ringwald M."/>
            <person name="Rost B."/>
            <person name="Ruan Y."/>
            <person name="Salzberg S.L."/>
            <person name="Sandelin A."/>
            <person name="Schneider C."/>
            <person name="Schoenbach C."/>
            <person name="Sekiguchi K."/>
            <person name="Semple C.A."/>
            <person name="Seno S."/>
            <person name="Sessa L."/>
            <person name="Sheng Y."/>
            <person name="Shibata Y."/>
            <person name="Shimada H."/>
            <person name="Shimada K."/>
            <person name="Silva D."/>
            <person name="Sinclair B."/>
            <person name="Sperling S."/>
            <person name="Stupka E."/>
            <person name="Sugiura K."/>
            <person name="Sultana R."/>
            <person name="Takenaka Y."/>
            <person name="Taki K."/>
            <person name="Tammoja K."/>
            <person name="Tan S.L."/>
            <person name="Tang S."/>
            <person name="Taylor M.S."/>
            <person name="Tegner J."/>
            <person name="Teichmann S.A."/>
            <person name="Ueda H.R."/>
            <person name="van Nimwegen E."/>
            <person name="Verardo R."/>
            <person name="Wei C.L."/>
            <person name="Yagi K."/>
            <person name="Yamanishi H."/>
            <person name="Zabarovsky E."/>
            <person name="Zhu S."/>
            <person name="Zimmer A."/>
            <person name="Hide W."/>
            <person name="Bult C."/>
            <person name="Grimmond S.M."/>
            <person name="Teasdale R.D."/>
            <person name="Liu E.T."/>
            <person name="Brusic V."/>
            <person name="Quackenbush J."/>
            <person name="Wahlestedt C."/>
            <person name="Mattick J.S."/>
            <person name="Hume D.A."/>
            <person name="Kai C."/>
            <person name="Sasaki D."/>
            <person name="Tomaru Y."/>
            <person name="Fukuda S."/>
            <person name="Kanamori-Katayama M."/>
            <person name="Suzuki M."/>
            <person name="Aoki J."/>
            <person name="Arakawa T."/>
            <person name="Iida J."/>
            <person name="Imamura K."/>
            <person name="Itoh M."/>
            <person name="Kato T."/>
            <person name="Kawaji H."/>
            <person name="Kawagashira N."/>
            <person name="Kawashima T."/>
            <person name="Kojima M."/>
            <person name="Kondo S."/>
            <person name="Konno H."/>
            <person name="Nakano K."/>
            <person name="Ninomiya N."/>
            <person name="Nishio T."/>
            <person name="Okada M."/>
            <person name="Plessy C."/>
            <person name="Shibata K."/>
            <person name="Shiraki T."/>
            <person name="Suzuki S."/>
            <person name="Tagami M."/>
            <person name="Waki K."/>
            <person name="Watahiki A."/>
            <person name="Okamura-Oho Y."/>
            <person name="Suzuki H."/>
            <person name="Kawai J."/>
            <person name="Hayashizaki Y."/>
        </authorList>
    </citation>
    <scope>NUCLEOTIDE SEQUENCE [LARGE SCALE MRNA]</scope>
    <source>
        <strain>C57BL/6J</strain>
        <tissue>Embryo</tissue>
        <tissue>Head</tissue>
    </source>
</reference>
<reference key="4">
    <citation type="journal article" date="2004" name="Genome Res.">
        <title>The status, quality, and expansion of the NIH full-length cDNA project: the Mammalian Gene Collection (MGC).</title>
        <authorList>
            <consortium name="The MGC Project Team"/>
        </authorList>
    </citation>
    <scope>NUCLEOTIDE SEQUENCE [LARGE SCALE MRNA]</scope>
    <source>
        <tissue>Embryo</tissue>
        <tissue>Eye</tissue>
        <tissue>Retina</tissue>
    </source>
</reference>